<sequence length="40" mass="4838">MKNTVKLEQFVALKEKDLQKIQGGEMRKSNNNFFHFLRRI</sequence>
<evidence type="ECO:0000255" key="1"/>
<evidence type="ECO:0000305" key="2"/>
<organism>
    <name type="scientific">Streptococcus mitis</name>
    <dbReference type="NCBI Taxonomy" id="28037"/>
    <lineage>
        <taxon>Bacteria</taxon>
        <taxon>Bacillati</taxon>
        <taxon>Bacillota</taxon>
        <taxon>Bacilli</taxon>
        <taxon>Lactobacillales</taxon>
        <taxon>Streptococcaceae</taxon>
        <taxon>Streptococcus</taxon>
        <taxon>Streptococcus mitis group</taxon>
    </lineage>
</organism>
<proteinExistence type="inferred from homology"/>
<keyword id="KW-0178">Competence</keyword>
<keyword id="KW-0588">Pheromone</keyword>
<keyword id="KW-0964">Secreted</keyword>
<feature type="propeptide" id="PRO_0000005873" evidence="1">
    <location>
        <begin position="1"/>
        <end position="24"/>
    </location>
</feature>
<feature type="peptide" id="PRO_0000005874" description="Competence-stimulating peptide">
    <location>
        <begin position="25"/>
        <end position="40"/>
    </location>
</feature>
<protein>
    <recommendedName>
        <fullName>Competence-stimulating peptide</fullName>
        <shortName>CSP</shortName>
    </recommendedName>
</protein>
<reference key="1">
    <citation type="journal article" date="1997" name="J. Bacteriol.">
        <title>Natural competence in the genus Streptococcus: evidence that streptococci can change pherotype by interspecies recombinational exchanges.</title>
        <authorList>
            <person name="Haevarstein L.S."/>
            <person name="Hakenbeck R."/>
            <person name="Gaustad P."/>
        </authorList>
    </citation>
    <scope>NUCLEOTIDE SEQUENCE [GENOMIC DNA]</scope>
    <source>
        <strain>HU8</strain>
    </source>
</reference>
<dbReference type="EMBL" id="AJ000866">
    <property type="protein sequence ID" value="CAA04347.1"/>
    <property type="molecule type" value="Genomic_DNA"/>
</dbReference>
<dbReference type="RefSeq" id="WP_033689611.1">
    <property type="nucleotide sequence ID" value="NZ_CP028415.1"/>
</dbReference>
<dbReference type="SMR" id="O33668"/>
<dbReference type="GO" id="GO:0005576">
    <property type="term" value="C:extracellular region"/>
    <property type="evidence" value="ECO:0007669"/>
    <property type="project" value="UniProtKB-SubCell"/>
</dbReference>
<dbReference type="GO" id="GO:0005186">
    <property type="term" value="F:pheromone activity"/>
    <property type="evidence" value="ECO:0007669"/>
    <property type="project" value="UniProtKB-KW"/>
</dbReference>
<dbReference type="GO" id="GO:0030420">
    <property type="term" value="P:establishment of competence for transformation"/>
    <property type="evidence" value="ECO:0007669"/>
    <property type="project" value="UniProtKB-KW"/>
</dbReference>
<dbReference type="InterPro" id="IPR004288">
    <property type="entry name" value="Competence_ComC"/>
</dbReference>
<dbReference type="NCBIfam" id="NF033214">
    <property type="entry name" value="ComC_Streptocco"/>
    <property type="match status" value="1"/>
</dbReference>
<dbReference type="Pfam" id="PF03047">
    <property type="entry name" value="ComC"/>
    <property type="match status" value="1"/>
</dbReference>
<name>CSP3_STRMT</name>
<comment type="function">
    <text>Acts as a pheromone, induces cells to develop competence for genetic transformation.</text>
</comment>
<comment type="subcellular location">
    <subcellularLocation>
        <location>Secreted</location>
    </subcellularLocation>
</comment>
<comment type="similarity">
    <text evidence="2">Belongs to the ComC family.</text>
</comment>
<gene>
    <name type="primary">comC</name>
</gene>
<accession>O33668</accession>